<feature type="chain" id="PRO_1000005733" description="Nicotinamide-nucleotide adenylyltransferase">
    <location>
        <begin position="1"/>
        <end position="172"/>
    </location>
</feature>
<accession>A6UTM2</accession>
<sequence>MRALIIGRWQPFHNGHLSIIKEISNEVDEIIIGIGSAQKSHSLDNPFTAGERIMMIIKSLKKYNFPYYVIPIKDIEFNAVWVSYVEALTPPFDIVYSGNALVKELFEEKGYEVRKPKLYNRTEYSGTEIRKRIINNEDWKHLIPNGVINVIDEIDGENRIKRLNMKDYDIIE</sequence>
<gene>
    <name type="ordered locus">Maeo_0254</name>
</gene>
<name>NADM_META3</name>
<protein>
    <recommendedName>
        <fullName evidence="1">Nicotinamide-nucleotide adenylyltransferase</fullName>
        <ecNumber evidence="1">2.7.7.1</ecNumber>
    </recommendedName>
    <alternativeName>
        <fullName evidence="1">NAD(+) diphosphorylase</fullName>
    </alternativeName>
    <alternativeName>
        <fullName evidence="1">NAD(+) pyrophosphorylase</fullName>
    </alternativeName>
    <alternativeName>
        <fullName evidence="1">NMN adenylyltransferase</fullName>
    </alternativeName>
</protein>
<keyword id="KW-0067">ATP-binding</keyword>
<keyword id="KW-0963">Cytoplasm</keyword>
<keyword id="KW-0520">NAD</keyword>
<keyword id="KW-0547">Nucleotide-binding</keyword>
<keyword id="KW-0548">Nucleotidyltransferase</keyword>
<keyword id="KW-0662">Pyridine nucleotide biosynthesis</keyword>
<keyword id="KW-0808">Transferase</keyword>
<dbReference type="EC" id="2.7.7.1" evidence="1"/>
<dbReference type="EMBL" id="CP000743">
    <property type="protein sequence ID" value="ABR55844.1"/>
    <property type="molecule type" value="Genomic_DNA"/>
</dbReference>
<dbReference type="RefSeq" id="WP_011972976.1">
    <property type="nucleotide sequence ID" value="NC_009635.1"/>
</dbReference>
<dbReference type="SMR" id="A6UTM2"/>
<dbReference type="STRING" id="419665.Maeo_0254"/>
<dbReference type="GeneID" id="5327760"/>
<dbReference type="KEGG" id="mae:Maeo_0254"/>
<dbReference type="eggNOG" id="arCOG00972">
    <property type="taxonomic scope" value="Archaea"/>
</dbReference>
<dbReference type="HOGENOM" id="CLU_108783_0_0_2"/>
<dbReference type="OrthoDB" id="264480at2157"/>
<dbReference type="UniPathway" id="UPA00253">
    <property type="reaction ID" value="UER00600"/>
</dbReference>
<dbReference type="Proteomes" id="UP000001106">
    <property type="component" value="Chromosome"/>
</dbReference>
<dbReference type="GO" id="GO:0005737">
    <property type="term" value="C:cytoplasm"/>
    <property type="evidence" value="ECO:0007669"/>
    <property type="project" value="UniProtKB-SubCell"/>
</dbReference>
<dbReference type="GO" id="GO:0005524">
    <property type="term" value="F:ATP binding"/>
    <property type="evidence" value="ECO:0007669"/>
    <property type="project" value="UniProtKB-KW"/>
</dbReference>
<dbReference type="GO" id="GO:0000309">
    <property type="term" value="F:nicotinamide-nucleotide adenylyltransferase activity"/>
    <property type="evidence" value="ECO:0007669"/>
    <property type="project" value="UniProtKB-UniRule"/>
</dbReference>
<dbReference type="GO" id="GO:0009435">
    <property type="term" value="P:NAD biosynthetic process"/>
    <property type="evidence" value="ECO:0007669"/>
    <property type="project" value="UniProtKB-UniRule"/>
</dbReference>
<dbReference type="CDD" id="cd02166">
    <property type="entry name" value="NMNAT_Archaea"/>
    <property type="match status" value="1"/>
</dbReference>
<dbReference type="Gene3D" id="3.40.50.620">
    <property type="entry name" value="HUPs"/>
    <property type="match status" value="1"/>
</dbReference>
<dbReference type="HAMAP" id="MF_00243">
    <property type="entry name" value="NMN_adenylyltr"/>
    <property type="match status" value="1"/>
</dbReference>
<dbReference type="InterPro" id="IPR004821">
    <property type="entry name" value="Cyt_trans-like"/>
</dbReference>
<dbReference type="InterPro" id="IPR006418">
    <property type="entry name" value="NMN_Atrans_arc"/>
</dbReference>
<dbReference type="InterPro" id="IPR014729">
    <property type="entry name" value="Rossmann-like_a/b/a_fold"/>
</dbReference>
<dbReference type="NCBIfam" id="TIGR01527">
    <property type="entry name" value="arch_NMN_Atrans"/>
    <property type="match status" value="1"/>
</dbReference>
<dbReference type="NCBIfam" id="TIGR00125">
    <property type="entry name" value="cyt_tran_rel"/>
    <property type="match status" value="1"/>
</dbReference>
<dbReference type="NCBIfam" id="NF002243">
    <property type="entry name" value="PRK01153.1"/>
    <property type="match status" value="1"/>
</dbReference>
<dbReference type="PANTHER" id="PTHR21342:SF0">
    <property type="entry name" value="BIFUNCTIONAL NMN ADENYLYLTRANSFERASE_NUDIX HYDROLASE"/>
    <property type="match status" value="1"/>
</dbReference>
<dbReference type="PANTHER" id="PTHR21342">
    <property type="entry name" value="PHOSPHOPANTETHEINE ADENYLYLTRANSFERASE"/>
    <property type="match status" value="1"/>
</dbReference>
<dbReference type="Pfam" id="PF01467">
    <property type="entry name" value="CTP_transf_like"/>
    <property type="match status" value="1"/>
</dbReference>
<dbReference type="SUPFAM" id="SSF52374">
    <property type="entry name" value="Nucleotidylyl transferase"/>
    <property type="match status" value="1"/>
</dbReference>
<evidence type="ECO:0000255" key="1">
    <source>
        <dbReference type="HAMAP-Rule" id="MF_00243"/>
    </source>
</evidence>
<comment type="catalytic activity">
    <reaction evidence="1">
        <text>beta-nicotinamide D-ribonucleotide + ATP + H(+) = diphosphate + NAD(+)</text>
        <dbReference type="Rhea" id="RHEA:21360"/>
        <dbReference type="ChEBI" id="CHEBI:14649"/>
        <dbReference type="ChEBI" id="CHEBI:15378"/>
        <dbReference type="ChEBI" id="CHEBI:30616"/>
        <dbReference type="ChEBI" id="CHEBI:33019"/>
        <dbReference type="ChEBI" id="CHEBI:57540"/>
        <dbReference type="EC" id="2.7.7.1"/>
    </reaction>
</comment>
<comment type="pathway">
    <text evidence="1">Cofactor biosynthesis; NAD(+) biosynthesis; NAD(+) from nicotinamide D-ribonucleotide: step 1/1.</text>
</comment>
<comment type="subcellular location">
    <subcellularLocation>
        <location evidence="1">Cytoplasm</location>
    </subcellularLocation>
</comment>
<comment type="similarity">
    <text evidence="1">Belongs to the archaeal NMN adenylyltransferase family.</text>
</comment>
<organism>
    <name type="scientific">Methanococcus aeolicus (strain ATCC BAA-1280 / DSM 17508 / OCM 812 / Nankai-3)</name>
    <dbReference type="NCBI Taxonomy" id="419665"/>
    <lineage>
        <taxon>Archaea</taxon>
        <taxon>Methanobacteriati</taxon>
        <taxon>Methanobacteriota</taxon>
        <taxon>Methanomada group</taxon>
        <taxon>Methanococci</taxon>
        <taxon>Methanococcales</taxon>
        <taxon>Methanococcaceae</taxon>
        <taxon>Methanococcus</taxon>
    </lineage>
</organism>
<reference key="1">
    <citation type="submission" date="2007-06" db="EMBL/GenBank/DDBJ databases">
        <title>Complete sequence of Methanococcus aeolicus Nankai-3.</title>
        <authorList>
            <consortium name="US DOE Joint Genome Institute"/>
            <person name="Copeland A."/>
            <person name="Lucas S."/>
            <person name="Lapidus A."/>
            <person name="Barry K."/>
            <person name="Glavina del Rio T."/>
            <person name="Dalin E."/>
            <person name="Tice H."/>
            <person name="Pitluck S."/>
            <person name="Chain P."/>
            <person name="Malfatti S."/>
            <person name="Shin M."/>
            <person name="Vergez L."/>
            <person name="Schmutz J."/>
            <person name="Larimer F."/>
            <person name="Land M."/>
            <person name="Hauser L."/>
            <person name="Kyrpides N."/>
            <person name="Lykidis A."/>
            <person name="Sieprawska-Lupa M."/>
            <person name="Whitman W.B."/>
            <person name="Richardson P."/>
        </authorList>
    </citation>
    <scope>NUCLEOTIDE SEQUENCE [LARGE SCALE GENOMIC DNA]</scope>
    <source>
        <strain>ATCC BAA-1280 / DSM 17508 / OCM 812 / Nankai-3</strain>
    </source>
</reference>
<proteinExistence type="inferred from homology"/>